<gene>
    <name evidence="1" type="primary">secB</name>
    <name type="ordered locus">BP0604</name>
</gene>
<proteinExistence type="inferred from homology"/>
<reference key="1">
    <citation type="journal article" date="2003" name="Nat. Genet.">
        <title>Comparative analysis of the genome sequences of Bordetella pertussis, Bordetella parapertussis and Bordetella bronchiseptica.</title>
        <authorList>
            <person name="Parkhill J."/>
            <person name="Sebaihia M."/>
            <person name="Preston A."/>
            <person name="Murphy L.D."/>
            <person name="Thomson N.R."/>
            <person name="Harris D.E."/>
            <person name="Holden M.T.G."/>
            <person name="Churcher C.M."/>
            <person name="Bentley S.D."/>
            <person name="Mungall K.L."/>
            <person name="Cerdeno-Tarraga A.-M."/>
            <person name="Temple L."/>
            <person name="James K.D."/>
            <person name="Harris B."/>
            <person name="Quail M.A."/>
            <person name="Achtman M."/>
            <person name="Atkin R."/>
            <person name="Baker S."/>
            <person name="Basham D."/>
            <person name="Bason N."/>
            <person name="Cherevach I."/>
            <person name="Chillingworth T."/>
            <person name="Collins M."/>
            <person name="Cronin A."/>
            <person name="Davis P."/>
            <person name="Doggett J."/>
            <person name="Feltwell T."/>
            <person name="Goble A."/>
            <person name="Hamlin N."/>
            <person name="Hauser H."/>
            <person name="Holroyd S."/>
            <person name="Jagels K."/>
            <person name="Leather S."/>
            <person name="Moule S."/>
            <person name="Norberczak H."/>
            <person name="O'Neil S."/>
            <person name="Ormond D."/>
            <person name="Price C."/>
            <person name="Rabbinowitsch E."/>
            <person name="Rutter S."/>
            <person name="Sanders M."/>
            <person name="Saunders D."/>
            <person name="Seeger K."/>
            <person name="Sharp S."/>
            <person name="Simmonds M."/>
            <person name="Skelton J."/>
            <person name="Squares R."/>
            <person name="Squares S."/>
            <person name="Stevens K."/>
            <person name="Unwin L."/>
            <person name="Whitehead S."/>
            <person name="Barrell B.G."/>
            <person name="Maskell D.J."/>
        </authorList>
    </citation>
    <scope>NUCLEOTIDE SEQUENCE [LARGE SCALE GENOMIC DNA]</scope>
    <source>
        <strain>Tohama I / ATCC BAA-589 / NCTC 13251</strain>
    </source>
</reference>
<dbReference type="EMBL" id="BX640412">
    <property type="protein sequence ID" value="CAE44930.1"/>
    <property type="molecule type" value="Genomic_DNA"/>
</dbReference>
<dbReference type="RefSeq" id="NP_879447.1">
    <property type="nucleotide sequence ID" value="NC_002929.2"/>
</dbReference>
<dbReference type="RefSeq" id="WP_003807422.1">
    <property type="nucleotide sequence ID" value="NZ_CP039022.1"/>
</dbReference>
<dbReference type="SMR" id="Q7VS46"/>
<dbReference type="STRING" id="257313.BP0604"/>
<dbReference type="PaxDb" id="257313-BP0604"/>
<dbReference type="GeneID" id="93206523"/>
<dbReference type="KEGG" id="bpe:BP0604"/>
<dbReference type="PATRIC" id="fig|257313.5.peg.645"/>
<dbReference type="eggNOG" id="COG1952">
    <property type="taxonomic scope" value="Bacteria"/>
</dbReference>
<dbReference type="HOGENOM" id="CLU_111574_1_0_4"/>
<dbReference type="Proteomes" id="UP000002676">
    <property type="component" value="Chromosome"/>
</dbReference>
<dbReference type="GO" id="GO:0005737">
    <property type="term" value="C:cytoplasm"/>
    <property type="evidence" value="ECO:0007669"/>
    <property type="project" value="UniProtKB-SubCell"/>
</dbReference>
<dbReference type="GO" id="GO:0051082">
    <property type="term" value="F:unfolded protein binding"/>
    <property type="evidence" value="ECO:0007669"/>
    <property type="project" value="InterPro"/>
</dbReference>
<dbReference type="GO" id="GO:0006457">
    <property type="term" value="P:protein folding"/>
    <property type="evidence" value="ECO:0007669"/>
    <property type="project" value="UniProtKB-UniRule"/>
</dbReference>
<dbReference type="GO" id="GO:0051262">
    <property type="term" value="P:protein tetramerization"/>
    <property type="evidence" value="ECO:0007669"/>
    <property type="project" value="InterPro"/>
</dbReference>
<dbReference type="GO" id="GO:0015031">
    <property type="term" value="P:protein transport"/>
    <property type="evidence" value="ECO:0007669"/>
    <property type="project" value="UniProtKB-UniRule"/>
</dbReference>
<dbReference type="Gene3D" id="3.10.420.10">
    <property type="entry name" value="SecB-like"/>
    <property type="match status" value="1"/>
</dbReference>
<dbReference type="HAMAP" id="MF_00821">
    <property type="entry name" value="SecB"/>
    <property type="match status" value="1"/>
</dbReference>
<dbReference type="InterPro" id="IPR003708">
    <property type="entry name" value="SecB"/>
</dbReference>
<dbReference type="InterPro" id="IPR035958">
    <property type="entry name" value="SecB-like_sf"/>
</dbReference>
<dbReference type="NCBIfam" id="NF004394">
    <property type="entry name" value="PRK05751.1-5"/>
    <property type="match status" value="1"/>
</dbReference>
<dbReference type="NCBIfam" id="TIGR00809">
    <property type="entry name" value="secB"/>
    <property type="match status" value="1"/>
</dbReference>
<dbReference type="PANTHER" id="PTHR36918">
    <property type="match status" value="1"/>
</dbReference>
<dbReference type="PANTHER" id="PTHR36918:SF1">
    <property type="entry name" value="PROTEIN-EXPORT PROTEIN SECB"/>
    <property type="match status" value="1"/>
</dbReference>
<dbReference type="Pfam" id="PF02556">
    <property type="entry name" value="SecB"/>
    <property type="match status" value="1"/>
</dbReference>
<dbReference type="PRINTS" id="PR01594">
    <property type="entry name" value="SECBCHAPRONE"/>
</dbReference>
<dbReference type="SUPFAM" id="SSF54611">
    <property type="entry name" value="SecB-like"/>
    <property type="match status" value="1"/>
</dbReference>
<accession>Q7VS46</accession>
<organism>
    <name type="scientific">Bordetella pertussis (strain Tohama I / ATCC BAA-589 / NCTC 13251)</name>
    <dbReference type="NCBI Taxonomy" id="257313"/>
    <lineage>
        <taxon>Bacteria</taxon>
        <taxon>Pseudomonadati</taxon>
        <taxon>Pseudomonadota</taxon>
        <taxon>Betaproteobacteria</taxon>
        <taxon>Burkholderiales</taxon>
        <taxon>Alcaligenaceae</taxon>
        <taxon>Bordetella</taxon>
    </lineage>
</organism>
<evidence type="ECO:0000255" key="1">
    <source>
        <dbReference type="HAMAP-Rule" id="MF_00821"/>
    </source>
</evidence>
<evidence type="ECO:0000256" key="2">
    <source>
        <dbReference type="SAM" id="MobiDB-lite"/>
    </source>
</evidence>
<name>SECB_BORPE</name>
<sequence>MADQDQTNQQAGSDAPSFNLQRVYLKDLSLEMPNAPHVFLEQEAPQVEVSINVGGQRLAETVFESTVTVTVTTRVNDKVLYLVEGTQAGIFELANIPAEQMDPLLGIVCPTMLYPYLRANVADAITRTSLPALHLAEVNFQALYEQRLAEMAQQQPDAANGNDSGIILPPGATRQ</sequence>
<feature type="chain" id="PRO_0000055350" description="Protein-export protein SecB">
    <location>
        <begin position="1"/>
        <end position="175"/>
    </location>
</feature>
<feature type="region of interest" description="Disordered" evidence="2">
    <location>
        <begin position="153"/>
        <end position="175"/>
    </location>
</feature>
<feature type="compositionally biased region" description="Polar residues" evidence="2">
    <location>
        <begin position="153"/>
        <end position="163"/>
    </location>
</feature>
<comment type="function">
    <text evidence="1">One of the proteins required for the normal export of preproteins out of the cell cytoplasm. It is a molecular chaperone that binds to a subset of precursor proteins, maintaining them in a translocation-competent state. It also specifically binds to its receptor SecA.</text>
</comment>
<comment type="subunit">
    <text evidence="1">Homotetramer, a dimer of dimers. One homotetramer interacts with 1 SecA dimer.</text>
</comment>
<comment type="subcellular location">
    <subcellularLocation>
        <location evidence="1">Cytoplasm</location>
    </subcellularLocation>
</comment>
<comment type="similarity">
    <text evidence="1">Belongs to the SecB family.</text>
</comment>
<keyword id="KW-0143">Chaperone</keyword>
<keyword id="KW-0963">Cytoplasm</keyword>
<keyword id="KW-0653">Protein transport</keyword>
<keyword id="KW-1185">Reference proteome</keyword>
<keyword id="KW-0811">Translocation</keyword>
<keyword id="KW-0813">Transport</keyword>
<protein>
    <recommendedName>
        <fullName evidence="1">Protein-export protein SecB</fullName>
    </recommendedName>
</protein>